<proteinExistence type="inferred from homology"/>
<reference key="1">
    <citation type="submission" date="2008-01" db="EMBL/GenBank/DDBJ databases">
        <title>Complete sequence of Shewanella halifaxensis HAW-EB4.</title>
        <authorList>
            <consortium name="US DOE Joint Genome Institute"/>
            <person name="Copeland A."/>
            <person name="Lucas S."/>
            <person name="Lapidus A."/>
            <person name="Glavina del Rio T."/>
            <person name="Dalin E."/>
            <person name="Tice H."/>
            <person name="Bruce D."/>
            <person name="Goodwin L."/>
            <person name="Pitluck S."/>
            <person name="Sims D."/>
            <person name="Brettin T."/>
            <person name="Detter J.C."/>
            <person name="Han C."/>
            <person name="Kuske C.R."/>
            <person name="Schmutz J."/>
            <person name="Larimer F."/>
            <person name="Land M."/>
            <person name="Hauser L."/>
            <person name="Kyrpides N."/>
            <person name="Kim E."/>
            <person name="Zhao J.-S."/>
            <person name="Richardson P."/>
        </authorList>
    </citation>
    <scope>NUCLEOTIDE SEQUENCE [LARGE SCALE GENOMIC DNA]</scope>
    <source>
        <strain>HAW-EB4</strain>
    </source>
</reference>
<evidence type="ECO:0000255" key="1">
    <source>
        <dbReference type="HAMAP-Rule" id="MF_00262"/>
    </source>
</evidence>
<accession>B0TRI1</accession>
<comment type="function">
    <text evidence="1">Prevents the cell division inhibition by proteins MinC and MinD at internal division sites while permitting inhibition at polar sites. This ensures cell division at the proper site by restricting the formation of a division septum at the midpoint of the long axis of the cell.</text>
</comment>
<comment type="similarity">
    <text evidence="1">Belongs to the MinE family.</text>
</comment>
<gene>
    <name evidence="1" type="primary">minE</name>
    <name type="ordered locus">Shal_1834</name>
</gene>
<protein>
    <recommendedName>
        <fullName evidence="1">Cell division topological specificity factor</fullName>
    </recommendedName>
</protein>
<organism>
    <name type="scientific">Shewanella halifaxensis (strain HAW-EB4)</name>
    <dbReference type="NCBI Taxonomy" id="458817"/>
    <lineage>
        <taxon>Bacteria</taxon>
        <taxon>Pseudomonadati</taxon>
        <taxon>Pseudomonadota</taxon>
        <taxon>Gammaproteobacteria</taxon>
        <taxon>Alteromonadales</taxon>
        <taxon>Shewanellaceae</taxon>
        <taxon>Shewanella</taxon>
    </lineage>
</organism>
<feature type="chain" id="PRO_1000078647" description="Cell division topological specificity factor">
    <location>
        <begin position="1"/>
        <end position="86"/>
    </location>
</feature>
<dbReference type="EMBL" id="CP000931">
    <property type="protein sequence ID" value="ABZ76399.1"/>
    <property type="molecule type" value="Genomic_DNA"/>
</dbReference>
<dbReference type="RefSeq" id="WP_012276931.1">
    <property type="nucleotide sequence ID" value="NC_010334.1"/>
</dbReference>
<dbReference type="SMR" id="B0TRI1"/>
<dbReference type="STRING" id="458817.Shal_1834"/>
<dbReference type="KEGG" id="shl:Shal_1834"/>
<dbReference type="eggNOG" id="COG0851">
    <property type="taxonomic scope" value="Bacteria"/>
</dbReference>
<dbReference type="HOGENOM" id="CLU_137929_2_2_6"/>
<dbReference type="OrthoDB" id="9802655at2"/>
<dbReference type="Proteomes" id="UP000001317">
    <property type="component" value="Chromosome"/>
</dbReference>
<dbReference type="GO" id="GO:0051301">
    <property type="term" value="P:cell division"/>
    <property type="evidence" value="ECO:0007669"/>
    <property type="project" value="UniProtKB-KW"/>
</dbReference>
<dbReference type="GO" id="GO:0032955">
    <property type="term" value="P:regulation of division septum assembly"/>
    <property type="evidence" value="ECO:0007669"/>
    <property type="project" value="InterPro"/>
</dbReference>
<dbReference type="FunFam" id="3.30.1070.10:FF:000001">
    <property type="entry name" value="Cell division topological specificity factor"/>
    <property type="match status" value="1"/>
</dbReference>
<dbReference type="Gene3D" id="3.30.1070.10">
    <property type="entry name" value="Cell division topological specificity factor MinE"/>
    <property type="match status" value="1"/>
</dbReference>
<dbReference type="HAMAP" id="MF_00262">
    <property type="entry name" value="MinE"/>
    <property type="match status" value="1"/>
</dbReference>
<dbReference type="InterPro" id="IPR005527">
    <property type="entry name" value="MinE"/>
</dbReference>
<dbReference type="InterPro" id="IPR036707">
    <property type="entry name" value="MinE_sf"/>
</dbReference>
<dbReference type="NCBIfam" id="TIGR01215">
    <property type="entry name" value="minE"/>
    <property type="match status" value="1"/>
</dbReference>
<dbReference type="NCBIfam" id="NF001422">
    <property type="entry name" value="PRK00296.1"/>
    <property type="match status" value="1"/>
</dbReference>
<dbReference type="Pfam" id="PF03776">
    <property type="entry name" value="MinE"/>
    <property type="match status" value="1"/>
</dbReference>
<dbReference type="SUPFAM" id="SSF55229">
    <property type="entry name" value="Cell division protein MinE topological specificity domain"/>
    <property type="match status" value="1"/>
</dbReference>
<sequence length="86" mass="9864">MSLLDYFKTKKEPSTAVTAKERLQIIVAHQRGERGAPDYFPQMKQEIIEVIRKYVQVGPDQVSVQLEQTDDNFSVLELNVTLPEQS</sequence>
<keyword id="KW-0131">Cell cycle</keyword>
<keyword id="KW-0132">Cell division</keyword>
<name>MINE_SHEHH</name>